<feature type="chain" id="PRO_1000120629" description="Small ribosomal subunit protein bS21">
    <location>
        <begin position="1"/>
        <end position="65"/>
    </location>
</feature>
<feature type="region of interest" description="Disordered" evidence="2">
    <location>
        <begin position="33"/>
        <end position="65"/>
    </location>
</feature>
<feature type="compositionally biased region" description="Basic and acidic residues" evidence="2">
    <location>
        <begin position="33"/>
        <end position="42"/>
    </location>
</feature>
<feature type="compositionally biased region" description="Basic residues" evidence="2">
    <location>
        <begin position="43"/>
        <end position="58"/>
    </location>
</feature>
<keyword id="KW-0687">Ribonucleoprotein</keyword>
<keyword id="KW-0689">Ribosomal protein</keyword>
<proteinExistence type="inferred from homology"/>
<evidence type="ECO:0000255" key="1">
    <source>
        <dbReference type="HAMAP-Rule" id="MF_00358"/>
    </source>
</evidence>
<evidence type="ECO:0000256" key="2">
    <source>
        <dbReference type="SAM" id="MobiDB-lite"/>
    </source>
</evidence>
<evidence type="ECO:0000305" key="3"/>
<protein>
    <recommendedName>
        <fullName evidence="1">Small ribosomal subunit protein bS21</fullName>
    </recommendedName>
    <alternativeName>
        <fullName evidence="3">30S ribosomal protein S21</fullName>
    </alternativeName>
</protein>
<reference key="1">
    <citation type="journal article" date="2011" name="Stand. Genomic Sci.">
        <title>Complete genome sequence of the filamentous gliding predatory bacterium Herpetosiphon aurantiacus type strain (114-95(T)).</title>
        <authorList>
            <person name="Kiss H."/>
            <person name="Nett M."/>
            <person name="Domin N."/>
            <person name="Martin K."/>
            <person name="Maresca J.A."/>
            <person name="Copeland A."/>
            <person name="Lapidus A."/>
            <person name="Lucas S."/>
            <person name="Berry K.W."/>
            <person name="Glavina Del Rio T."/>
            <person name="Dalin E."/>
            <person name="Tice H."/>
            <person name="Pitluck S."/>
            <person name="Richardson P."/>
            <person name="Bruce D."/>
            <person name="Goodwin L."/>
            <person name="Han C."/>
            <person name="Detter J.C."/>
            <person name="Schmutz J."/>
            <person name="Brettin T."/>
            <person name="Land M."/>
            <person name="Hauser L."/>
            <person name="Kyrpides N.C."/>
            <person name="Ivanova N."/>
            <person name="Goeker M."/>
            <person name="Woyke T."/>
            <person name="Klenk H.P."/>
            <person name="Bryant D.A."/>
        </authorList>
    </citation>
    <scope>NUCLEOTIDE SEQUENCE [LARGE SCALE GENOMIC DNA]</scope>
    <source>
        <strain>ATCC 23779 / DSM 785 / 114-95</strain>
    </source>
</reference>
<accession>A9B119</accession>
<dbReference type="EMBL" id="CP000875">
    <property type="protein sequence ID" value="ABX05297.1"/>
    <property type="molecule type" value="Genomic_DNA"/>
</dbReference>
<dbReference type="SMR" id="A9B119"/>
<dbReference type="FunCoup" id="A9B119">
    <property type="interactions" value="240"/>
</dbReference>
<dbReference type="STRING" id="316274.Haur_2659"/>
<dbReference type="KEGG" id="hau:Haur_2659"/>
<dbReference type="eggNOG" id="COG0828">
    <property type="taxonomic scope" value="Bacteria"/>
</dbReference>
<dbReference type="HOGENOM" id="CLU_159258_1_2_0"/>
<dbReference type="InParanoid" id="A9B119"/>
<dbReference type="Proteomes" id="UP000000787">
    <property type="component" value="Chromosome"/>
</dbReference>
<dbReference type="GO" id="GO:1990904">
    <property type="term" value="C:ribonucleoprotein complex"/>
    <property type="evidence" value="ECO:0007669"/>
    <property type="project" value="UniProtKB-KW"/>
</dbReference>
<dbReference type="GO" id="GO:0005840">
    <property type="term" value="C:ribosome"/>
    <property type="evidence" value="ECO:0007669"/>
    <property type="project" value="UniProtKB-KW"/>
</dbReference>
<dbReference type="GO" id="GO:0003735">
    <property type="term" value="F:structural constituent of ribosome"/>
    <property type="evidence" value="ECO:0007669"/>
    <property type="project" value="InterPro"/>
</dbReference>
<dbReference type="GO" id="GO:0006412">
    <property type="term" value="P:translation"/>
    <property type="evidence" value="ECO:0007669"/>
    <property type="project" value="UniProtKB-UniRule"/>
</dbReference>
<dbReference type="Gene3D" id="1.20.5.1150">
    <property type="entry name" value="Ribosomal protein S8"/>
    <property type="match status" value="1"/>
</dbReference>
<dbReference type="HAMAP" id="MF_00358">
    <property type="entry name" value="Ribosomal_bS21"/>
    <property type="match status" value="1"/>
</dbReference>
<dbReference type="InterPro" id="IPR001911">
    <property type="entry name" value="Ribosomal_bS21"/>
</dbReference>
<dbReference type="InterPro" id="IPR038380">
    <property type="entry name" value="Ribosomal_bS21_sf"/>
</dbReference>
<dbReference type="NCBIfam" id="TIGR00030">
    <property type="entry name" value="S21p"/>
    <property type="match status" value="1"/>
</dbReference>
<dbReference type="PANTHER" id="PTHR21109">
    <property type="entry name" value="MITOCHONDRIAL 28S RIBOSOMAL PROTEIN S21"/>
    <property type="match status" value="1"/>
</dbReference>
<dbReference type="PANTHER" id="PTHR21109:SF22">
    <property type="entry name" value="SMALL RIBOSOMAL SUBUNIT PROTEIN BS21"/>
    <property type="match status" value="1"/>
</dbReference>
<dbReference type="Pfam" id="PF01165">
    <property type="entry name" value="Ribosomal_S21"/>
    <property type="match status" value="1"/>
</dbReference>
<dbReference type="PRINTS" id="PR00976">
    <property type="entry name" value="RIBOSOMALS21"/>
</dbReference>
<sequence>MASISVDSNESIDKALRRFNKAVQADGILTEARRREHYEKPSVKRKRKEAARLRKLQKMAREANN</sequence>
<organism>
    <name type="scientific">Herpetosiphon aurantiacus (strain ATCC 23779 / DSM 785 / 114-95)</name>
    <dbReference type="NCBI Taxonomy" id="316274"/>
    <lineage>
        <taxon>Bacteria</taxon>
        <taxon>Bacillati</taxon>
        <taxon>Chloroflexota</taxon>
        <taxon>Chloroflexia</taxon>
        <taxon>Herpetosiphonales</taxon>
        <taxon>Herpetosiphonaceae</taxon>
        <taxon>Herpetosiphon</taxon>
    </lineage>
</organism>
<comment type="similarity">
    <text evidence="1">Belongs to the bacterial ribosomal protein bS21 family.</text>
</comment>
<gene>
    <name evidence="1" type="primary">rpsU</name>
    <name type="ordered locus">Haur_2659</name>
</gene>
<name>RS21_HERA2</name>